<comment type="function">
    <text evidence="6 8">Serine/threonine-protein kinase that acts downstream of ERK (MAPK1/ERK2 and MAPK3/ERK1) signaling and mediates mitogenic and stress-induced activation of transcription factors, regulates translation, and mediates cellular proliferation, survival, and differentiation. May function as tumor suppressor in epithelial ovarian cancer cells.</text>
</comment>
<comment type="catalytic activity">
    <reaction>
        <text>L-seryl-[protein] + ATP = O-phospho-L-seryl-[protein] + ADP + H(+)</text>
        <dbReference type="Rhea" id="RHEA:17989"/>
        <dbReference type="Rhea" id="RHEA-COMP:9863"/>
        <dbReference type="Rhea" id="RHEA-COMP:11604"/>
        <dbReference type="ChEBI" id="CHEBI:15378"/>
        <dbReference type="ChEBI" id="CHEBI:29999"/>
        <dbReference type="ChEBI" id="CHEBI:30616"/>
        <dbReference type="ChEBI" id="CHEBI:83421"/>
        <dbReference type="ChEBI" id="CHEBI:456216"/>
        <dbReference type="EC" id="2.7.11.1"/>
    </reaction>
</comment>
<comment type="catalytic activity">
    <reaction>
        <text>L-threonyl-[protein] + ATP = O-phospho-L-threonyl-[protein] + ADP + H(+)</text>
        <dbReference type="Rhea" id="RHEA:46608"/>
        <dbReference type="Rhea" id="RHEA-COMP:11060"/>
        <dbReference type="Rhea" id="RHEA-COMP:11605"/>
        <dbReference type="ChEBI" id="CHEBI:15378"/>
        <dbReference type="ChEBI" id="CHEBI:30013"/>
        <dbReference type="ChEBI" id="CHEBI:30616"/>
        <dbReference type="ChEBI" id="CHEBI:61977"/>
        <dbReference type="ChEBI" id="CHEBI:456216"/>
        <dbReference type="EC" id="2.7.11.1"/>
    </reaction>
</comment>
<comment type="cofactor">
    <cofactor>
        <name>Mg(2+)</name>
        <dbReference type="ChEBI" id="CHEBI:18420"/>
    </cofactor>
</comment>
<comment type="activity regulation">
    <text evidence="5">Upon extracellular signal or mitogen stimulation, phosphorylated at Thr-570 in the C-terminal kinase domain (CTKD) by MAPK1/ERK2 and MAPK3/ERK1. The activated CTKD then autophosphorylates Ser-377, allowing binding of PDPK1, which in turn phosphorylates Ser-218 in the N-terminal kinase domain (NTDK) leading to the full activation of the protein and subsequent phosphorylation of the substrates by the NTKD.</text>
</comment>
<comment type="subunit">
    <text evidence="1 2">Forms a complex with either MAPK1/ERK2 or MAPK3/ERK1 in quiescent cells. Transiently dissociates following mitogenic stimulation (By similarity). Interacts with FBXO5; cooperate to induce the metaphase arrest of early blastomeres; increases and stabilizes interaction of FBXO5 with CDC20 (By similarity).</text>
</comment>
<comment type="interaction">
    <interactant intactId="EBI-1384149">
        <id>Q15349</id>
    </interactant>
    <interactant intactId="EBI-77613">
        <id>P05067</id>
        <label>APP</label>
    </interactant>
    <organismsDiffer>false</organismsDiffer>
    <experiments>3</experiments>
</comment>
<comment type="interaction">
    <interactant intactId="EBI-1384149">
        <id>Q15349</id>
    </interactant>
    <interactant intactId="EBI-365980">
        <id>P15056</id>
        <label>BRAF</label>
    </interactant>
    <organismsDiffer>false</organismsDiffer>
    <experiments>2</experiments>
</comment>
<comment type="interaction">
    <interactant intactId="EBI-1384149">
        <id>Q15349</id>
    </interactant>
    <interactant intactId="EBI-348169">
        <id>P67870</id>
        <label>CSNK2B</label>
    </interactant>
    <organismsDiffer>false</organismsDiffer>
    <experiments>4</experiments>
</comment>
<comment type="interaction">
    <interactant intactId="EBI-1384149">
        <id>Q15349</id>
    </interactant>
    <interactant intactId="EBI-948266">
        <id>O14901</id>
        <label>KLF11</label>
    </interactant>
    <organismsDiffer>false</organismsDiffer>
    <experiments>3</experiments>
</comment>
<comment type="interaction">
    <interactant intactId="EBI-1384149">
        <id>Q15349</id>
    </interactant>
    <interactant intactId="EBI-959949">
        <id>P28482</id>
        <label>MAPK1</label>
    </interactant>
    <organismsDiffer>false</organismsDiffer>
    <experiments>12</experiments>
</comment>
<comment type="interaction">
    <interactant intactId="EBI-1384149">
        <id>Q15349</id>
    </interactant>
    <interactant intactId="EBI-706254">
        <id>Q02156</id>
        <label>PRKCE</label>
    </interactant>
    <organismsDiffer>false</organismsDiffer>
    <experiments>2</experiments>
</comment>
<comment type="interaction">
    <interactant intactId="EBI-1384149">
        <id>Q15349</id>
    </interactant>
    <interactant intactId="EBI-357345">
        <id>Q14160</id>
        <label>SCRIB</label>
    </interactant>
    <organismsDiffer>false</organismsDiffer>
    <experiments>9</experiments>
</comment>
<comment type="interaction">
    <interactant intactId="EBI-1384149">
        <id>Q15349</id>
    </interactant>
    <interactant intactId="EBI-3442234">
        <id>Q9Y566</id>
        <label>SHANK1</label>
    </interactant>
    <organismsDiffer>false</organismsDiffer>
    <experiments>2</experiments>
</comment>
<comment type="interaction">
    <interactant intactId="EBI-1384149">
        <id>Q15349</id>
    </interactant>
    <interactant intactId="EBI-356498">
        <id>P62258</id>
        <label>YWHAE</label>
    </interactant>
    <organismsDiffer>false</organismsDiffer>
    <experiments>2</experiments>
</comment>
<comment type="subcellular location">
    <subcellularLocation>
        <location evidence="8">Nucleus</location>
    </subcellularLocation>
    <subcellularLocation>
        <location evidence="8">Cytoplasm</location>
    </subcellularLocation>
</comment>
<comment type="alternative products">
    <event type="alternative splicing"/>
    <isoform>
        <id>Q15349-1</id>
        <name>1</name>
        <sequence type="displayed"/>
    </isoform>
    <isoform>
        <id>Q15349-2</id>
        <name>2</name>
        <sequence type="described" ref="VSP_017732"/>
    </isoform>
    <isoform>
        <id>Q15349-3</id>
        <name>3</name>
        <sequence type="described" ref="VSP_041836"/>
    </isoform>
</comment>
<comment type="tissue specificity">
    <text evidence="6 8">Widely expressed with higher expression in lung, skeletal muscle, brain, uterus, ovary, thyroid and prostate.</text>
</comment>
<comment type="PTM">
    <text evidence="1">Activated by phosphorylation at Ser-218 by PDPK1. Autophosphorylated on Ser-377, as part of the activation process. May be phosphorylated at Thr-356 and Ser-360 by MAPK1/ERK2 and MAPK3/ERK1 (By similarity).</text>
</comment>
<comment type="PTM">
    <text evidence="1">N-terminal myristoylation results in an activated kinase in the absence of added growth factors.</text>
</comment>
<comment type="similarity">
    <text evidence="11">Belongs to the protein kinase superfamily. AGC Ser/Thr protein kinase family. S6 kinase subfamily.</text>
</comment>
<comment type="sequence caution" evidence="11">
    <conflict type="erroneous initiation">
        <sequence resource="EMBL-CDS" id="AAC82496"/>
    </conflict>
    <text>Extended N-terminus.</text>
</comment>
<comment type="sequence caution" evidence="11">
    <conflict type="erroneous initiation">
        <sequence resource="EMBL-CDS" id="BAD92353"/>
    </conflict>
    <text>Extended N-terminus.</text>
</comment>
<comment type="sequence caution" evidence="11">
    <conflict type="frameshift">
        <sequence resource="EMBL-CDS" id="BAG53121"/>
    </conflict>
</comment>
<protein>
    <recommendedName>
        <fullName>Ribosomal protein S6 kinase alpha-2</fullName>
        <shortName>S6K-alpha-2</shortName>
        <ecNumber>2.7.11.1</ecNumber>
    </recommendedName>
    <alternativeName>
        <fullName>90 kDa ribosomal protein S6 kinase 2</fullName>
        <shortName>p90-RSK 2</shortName>
        <shortName>p90RSK2</shortName>
    </alternativeName>
    <alternativeName>
        <fullName>MAP kinase-activated protein kinase 1c</fullName>
        <shortName>MAPK-activated protein kinase 1c</shortName>
        <shortName>MAPKAP kinase 1c</shortName>
        <shortName>MAPKAPK-1c</shortName>
    </alternativeName>
    <alternativeName>
        <fullName>Ribosomal S6 kinase 3</fullName>
        <shortName>RSK-3</shortName>
    </alternativeName>
    <alternativeName>
        <fullName>pp90RSK3</fullName>
    </alternativeName>
</protein>
<sequence>MDLSMKKFAVRRFFSVYLRRKSRSKSSSLSRLEEEGVVKEIDISHHVKEGFEKADPSQFELLKVLGQGSYGKVFLVRKVKGSDAGQLYAMKVLKKATLKVRDRVRSKMERDILAEVNHPFIVKLHYAFQTEGKLYLILDFLRGGDLFTRLSKEVMFTEEDVKFYLAELALALDHLHSLGIIYRDLKPENILLDEEGHIKITDFGLSKEAIDHDKRAYSFCGTIEYMAPEVVNRRGHTQSADWWSFGVLMFEMLTGSLPFQGKDRKETMALILKAKLGMPQFLSGEAQSLLRALFKRNPCNRLGAGIDGVEEIKRHPFFVTIDWNTLYRKEIKPPFKPAVGRPEDTFHFDPEFTARTPTDSPGVPPSANAHHLFRGFSFVASSLIQEPSQQDLHKVPVHPIVQQLHGNNIHFTDGYEIKEDIGVGSYSVCKRCVHKATDTEYAVKIIDKSKRDPSEEIEILLRYGQHPNIITLKDVYDDGKFVYLVMELMRGGELLDRILRQRYFSEREASDVLCTITKTMDYLHSQGVVHRDLKPSNILYRDESGSPESIRVCDFGFAKQLRAGNGLLMTPCYTANFVAPEVLKRQGYDAACDIWSLGILLYTMLAGFTPFANGPDDTPEEILARIGSGKYALSGGNWDSISDAAKDVVSKMLHVDPHQRLTAMQVLKHPWVVNREYLSPNQLSRQDVHLVKGAMAATYFALNRTPQAPRLEPVLSSNLAQRRGMKRLTSTRL</sequence>
<name>KS6A2_HUMAN</name>
<keyword id="KW-0025">Alternative splicing</keyword>
<keyword id="KW-0067">ATP-binding</keyword>
<keyword id="KW-0963">Cytoplasm</keyword>
<keyword id="KW-0418">Kinase</keyword>
<keyword id="KW-0460">Magnesium</keyword>
<keyword id="KW-0479">Metal-binding</keyword>
<keyword id="KW-0547">Nucleotide-binding</keyword>
<keyword id="KW-0539">Nucleus</keyword>
<keyword id="KW-0597">Phosphoprotein</keyword>
<keyword id="KW-1267">Proteomics identification</keyword>
<keyword id="KW-1185">Reference proteome</keyword>
<keyword id="KW-0677">Repeat</keyword>
<keyword id="KW-0723">Serine/threonine-protein kinase</keyword>
<keyword id="KW-0808">Transferase</keyword>
<keyword id="KW-0043">Tumor suppressor</keyword>
<organism>
    <name type="scientific">Homo sapiens</name>
    <name type="common">Human</name>
    <dbReference type="NCBI Taxonomy" id="9606"/>
    <lineage>
        <taxon>Eukaryota</taxon>
        <taxon>Metazoa</taxon>
        <taxon>Chordata</taxon>
        <taxon>Craniata</taxon>
        <taxon>Vertebrata</taxon>
        <taxon>Euteleostomi</taxon>
        <taxon>Mammalia</taxon>
        <taxon>Eutheria</taxon>
        <taxon>Euarchontoglires</taxon>
        <taxon>Primates</taxon>
        <taxon>Haplorrhini</taxon>
        <taxon>Catarrhini</taxon>
        <taxon>Hominidae</taxon>
        <taxon>Homo</taxon>
    </lineage>
</organism>
<evidence type="ECO:0000250" key="1"/>
<evidence type="ECO:0000250" key="2">
    <source>
        <dbReference type="UniProtKB" id="Q9WUT3"/>
    </source>
</evidence>
<evidence type="ECO:0000255" key="3">
    <source>
        <dbReference type="PROSITE-ProRule" id="PRU00159"/>
    </source>
</evidence>
<evidence type="ECO:0000255" key="4">
    <source>
        <dbReference type="PROSITE-ProRule" id="PRU00618"/>
    </source>
</evidence>
<evidence type="ECO:0000269" key="5">
    <source>
    </source>
</evidence>
<evidence type="ECO:0000269" key="6">
    <source>
    </source>
</evidence>
<evidence type="ECO:0000269" key="7">
    <source>
    </source>
</evidence>
<evidence type="ECO:0000269" key="8">
    <source>
    </source>
</evidence>
<evidence type="ECO:0000303" key="9">
    <source>
    </source>
</evidence>
<evidence type="ECO:0000303" key="10">
    <source ref="2"/>
</evidence>
<evidence type="ECO:0000305" key="11"/>
<evidence type="ECO:0007744" key="12">
    <source>
    </source>
</evidence>
<accession>Q15349</accession>
<accession>B3KTK9</accession>
<accession>Q15419</accession>
<accession>Q59GJ3</accession>
<accession>Q5TI68</accession>
<accession>Q96J38</accession>
<accession>Q9UJN5</accession>
<gene>
    <name type="primary">RPS6KA2</name>
    <name type="synonym">MAPKAPK1C</name>
    <name type="synonym">RSK3</name>
</gene>
<feature type="chain" id="PRO_0000086201" description="Ribosomal protein S6 kinase alpha-2">
    <location>
        <begin position="1"/>
        <end position="733"/>
    </location>
</feature>
<feature type="domain" description="Protein kinase 1" evidence="3">
    <location>
        <begin position="59"/>
        <end position="318"/>
    </location>
</feature>
<feature type="domain" description="AGC-kinase C-terminal" evidence="4">
    <location>
        <begin position="319"/>
        <end position="388"/>
    </location>
</feature>
<feature type="domain" description="Protein kinase 2" evidence="3">
    <location>
        <begin position="415"/>
        <end position="672"/>
    </location>
</feature>
<feature type="active site" description="Proton acceptor" evidence="1">
    <location>
        <position position="184"/>
    </location>
</feature>
<feature type="active site" description="Proton acceptor" evidence="1">
    <location>
        <position position="532"/>
    </location>
</feature>
<feature type="binding site" evidence="3">
    <location>
        <begin position="65"/>
        <end position="73"/>
    </location>
    <ligand>
        <name>ATP</name>
        <dbReference type="ChEBI" id="CHEBI:30616"/>
    </ligand>
</feature>
<feature type="binding site" evidence="3">
    <location>
        <position position="91"/>
    </location>
    <ligand>
        <name>ATP</name>
        <dbReference type="ChEBI" id="CHEBI:30616"/>
    </ligand>
</feature>
<feature type="binding site" evidence="3">
    <location>
        <begin position="421"/>
        <end position="429"/>
    </location>
    <ligand>
        <name>ATP</name>
        <dbReference type="ChEBI" id="CHEBI:30616"/>
    </ligand>
</feature>
<feature type="binding site" evidence="3">
    <location>
        <position position="444"/>
    </location>
    <ligand>
        <name>ATP</name>
        <dbReference type="ChEBI" id="CHEBI:30616"/>
    </ligand>
</feature>
<feature type="modified residue" description="Phosphoserine; by PDPK1" evidence="5">
    <location>
        <position position="218"/>
    </location>
</feature>
<feature type="modified residue" description="Phosphoserine" evidence="12">
    <location>
        <position position="377"/>
    </location>
</feature>
<feature type="splice variant" id="VSP_017732" description="In isoform 2." evidence="10">
    <original>MDLSMKKFAVRRFFSVYLRRKSRSKSSSLSRL</original>
    <variation>MPIAQLLELWKKIEVEPMEIETTEEDLNLDVGPATEDTAEEGKSDSAACKTKVAGSV</variation>
    <location>
        <begin position="1"/>
        <end position="32"/>
    </location>
</feature>
<feature type="splice variant" id="VSP_041836" description="In isoform 3." evidence="9">
    <original>MDLSMKKFAVRRFFSVYLRRKSRSKSSSLSRL</original>
    <variation>MPIAQLLELWKKIEVEPMEIETTEEDLNLDVEPTTEDTAE</variation>
    <location>
        <begin position="1"/>
        <end position="32"/>
    </location>
</feature>
<feature type="sequence variant" id="VAR_040627" description="In a metastatic melanoma sample; somatic mutation; dbSNP:rs267600891." evidence="7">
    <original>E</original>
    <variation>K</variation>
    <location>
        <position position="311"/>
    </location>
</feature>
<feature type="sequence variant" id="VAR_040628" description="In a colorectal adenocarcinoma sample; somatic mutation; dbSNP:rs376029388." evidence="7">
    <original>R</original>
    <variation>Q</variation>
    <location>
        <position position="732"/>
    </location>
</feature>
<feature type="sequence conflict" description="In Ref. 6; AAC82496." evidence="11" ref="6">
    <original>S</original>
    <variation>A</variation>
    <location>
        <position position="256"/>
    </location>
</feature>
<feature type="sequence conflict" description="In Ref. 6; AAC82496." evidence="11" ref="6">
    <original>A</original>
    <variation>S</variation>
    <location>
        <position position="269"/>
    </location>
</feature>
<feature type="sequence conflict" description="In Ref. 1; CAA59427 and 6; AAC82496." evidence="11" ref="1 6">
    <original>V</original>
    <variation>L</variation>
    <location>
        <position position="339"/>
    </location>
</feature>
<feature type="sequence conflict" description="In Ref. 6; AAC82496." evidence="11" ref="6">
    <original>D</original>
    <variation>G</variation>
    <location>
        <position position="447"/>
    </location>
</feature>
<feature type="sequence conflict" description="In Ref. 3; BAG53121." evidence="11" ref="3">
    <original>E</original>
    <variation>G</variation>
    <location sequence="Q15349-3">
        <position position="32"/>
    </location>
</feature>
<feature type="sequence conflict" description="In Ref. 3; BAG53121." evidence="11" ref="3">
    <original>T</original>
    <variation>A</variation>
    <location sequence="Q15349-3">
        <position position="34"/>
    </location>
</feature>
<dbReference type="EC" id="2.7.11.1"/>
<dbReference type="EMBL" id="X85106">
    <property type="protein sequence ID" value="CAA59427.1"/>
    <property type="molecule type" value="mRNA"/>
</dbReference>
<dbReference type="EMBL" id="AB209116">
    <property type="protein sequence ID" value="BAD92353.1"/>
    <property type="status" value="ALT_INIT"/>
    <property type="molecule type" value="mRNA"/>
</dbReference>
<dbReference type="EMBL" id="AK095751">
    <property type="protein sequence ID" value="BAG53121.1"/>
    <property type="status" value="ALT_FRAME"/>
    <property type="molecule type" value="mRNA"/>
</dbReference>
<dbReference type="EMBL" id="AL022069">
    <property type="protein sequence ID" value="CAI19651.1"/>
    <property type="molecule type" value="Genomic_DNA"/>
</dbReference>
<dbReference type="EMBL" id="Z98049">
    <property type="protein sequence ID" value="CAI19651.1"/>
    <property type="status" value="JOINED"/>
    <property type="molecule type" value="Genomic_DNA"/>
</dbReference>
<dbReference type="EMBL" id="AL023775">
    <property type="status" value="NOT_ANNOTATED_CDS"/>
    <property type="molecule type" value="Genomic_DNA"/>
</dbReference>
<dbReference type="EMBL" id="AL159163">
    <property type="status" value="NOT_ANNOTATED_CDS"/>
    <property type="molecule type" value="Genomic_DNA"/>
</dbReference>
<dbReference type="EMBL" id="Z98049">
    <property type="protein sequence ID" value="CAI20579.1"/>
    <property type="molecule type" value="Genomic_DNA"/>
</dbReference>
<dbReference type="EMBL" id="AL022069">
    <property type="protein sequence ID" value="CAI20579.1"/>
    <property type="status" value="JOINED"/>
    <property type="molecule type" value="Genomic_DNA"/>
</dbReference>
<dbReference type="EMBL" id="BC002363">
    <property type="protein sequence ID" value="AAH02363.1"/>
    <property type="molecule type" value="mRNA"/>
</dbReference>
<dbReference type="EMBL" id="L07598">
    <property type="protein sequence ID" value="AAC82496.1"/>
    <property type="status" value="ALT_INIT"/>
    <property type="molecule type" value="mRNA"/>
</dbReference>
<dbReference type="CCDS" id="CCDS34570.1">
    <molecule id="Q15349-3"/>
</dbReference>
<dbReference type="CCDS" id="CCDS5294.1">
    <molecule id="Q15349-1"/>
</dbReference>
<dbReference type="CCDS" id="CCDS83148.1">
    <molecule id="Q15349-2"/>
</dbReference>
<dbReference type="PIR" id="A57459">
    <property type="entry name" value="A57459"/>
</dbReference>
<dbReference type="RefSeq" id="NP_001006933.3">
    <molecule id="Q15349-3"/>
    <property type="nucleotide sequence ID" value="NM_001006932.3"/>
</dbReference>
<dbReference type="RefSeq" id="NP_001305865.1">
    <property type="nucleotide sequence ID" value="NM_001318936.1"/>
</dbReference>
<dbReference type="RefSeq" id="NP_001305866.1">
    <property type="nucleotide sequence ID" value="NM_001318937.1"/>
</dbReference>
<dbReference type="RefSeq" id="NP_001305867.1">
    <property type="nucleotide sequence ID" value="NM_001318938.1"/>
</dbReference>
<dbReference type="RefSeq" id="NP_066958.2">
    <molecule id="Q15349-1"/>
    <property type="nucleotide sequence ID" value="NM_021135.5"/>
</dbReference>
<dbReference type="SMR" id="Q15349"/>
<dbReference type="BioGRID" id="112110">
    <property type="interactions" value="195"/>
</dbReference>
<dbReference type="DIP" id="DIP-295N"/>
<dbReference type="FunCoup" id="Q15349">
    <property type="interactions" value="3133"/>
</dbReference>
<dbReference type="IntAct" id="Q15349">
    <property type="interactions" value="62"/>
</dbReference>
<dbReference type="MINT" id="Q15349"/>
<dbReference type="STRING" id="9606.ENSP00000422435"/>
<dbReference type="BindingDB" id="Q15349"/>
<dbReference type="ChEMBL" id="CHEMBL3906"/>
<dbReference type="DrugCentral" id="Q15349"/>
<dbReference type="GuidetoPHARMACOLOGY" id="1529"/>
<dbReference type="iPTMnet" id="Q15349"/>
<dbReference type="PhosphoSitePlus" id="Q15349"/>
<dbReference type="BioMuta" id="RPS6KA2"/>
<dbReference type="DMDM" id="90110031"/>
<dbReference type="REPRODUCTION-2DPAGE" id="Q15349"/>
<dbReference type="CPTAC" id="CPTAC-2945"/>
<dbReference type="jPOST" id="Q15349"/>
<dbReference type="MassIVE" id="Q15349"/>
<dbReference type="PaxDb" id="9606-ENSP00000427015"/>
<dbReference type="PeptideAtlas" id="Q15349"/>
<dbReference type="ProteomicsDB" id="60536">
    <molecule id="Q15349-1"/>
</dbReference>
<dbReference type="ProteomicsDB" id="60537">
    <molecule id="Q15349-2"/>
</dbReference>
<dbReference type="ProteomicsDB" id="60538">
    <molecule id="Q15349-3"/>
</dbReference>
<dbReference type="Antibodypedia" id="33522">
    <property type="antibodies" value="563 antibodies from 42 providers"/>
</dbReference>
<dbReference type="DNASU" id="6196"/>
<dbReference type="Ensembl" id="ENST00000265678.9">
    <molecule id="Q15349-1"/>
    <property type="protein sequence ID" value="ENSP00000265678.4"/>
    <property type="gene ID" value="ENSG00000071242.13"/>
</dbReference>
<dbReference type="Ensembl" id="ENST00000503859.5">
    <molecule id="Q15349-3"/>
    <property type="protein sequence ID" value="ENSP00000427015.1"/>
    <property type="gene ID" value="ENSG00000071242.13"/>
</dbReference>
<dbReference type="GeneID" id="6196"/>
<dbReference type="KEGG" id="hsa:6196"/>
<dbReference type="MANE-Select" id="ENST00000265678.9">
    <property type="protein sequence ID" value="ENSP00000265678.4"/>
    <property type="RefSeq nucleotide sequence ID" value="NM_021135.6"/>
    <property type="RefSeq protein sequence ID" value="NP_066958.2"/>
</dbReference>
<dbReference type="UCSC" id="uc003qvb.2">
    <molecule id="Q15349-1"/>
    <property type="organism name" value="human"/>
</dbReference>
<dbReference type="AGR" id="HGNC:10431"/>
<dbReference type="CTD" id="6196"/>
<dbReference type="DisGeNET" id="6196"/>
<dbReference type="GeneCards" id="RPS6KA2"/>
<dbReference type="HGNC" id="HGNC:10431">
    <property type="gene designation" value="RPS6KA2"/>
</dbReference>
<dbReference type="HPA" id="ENSG00000071242">
    <property type="expression patterns" value="Low tissue specificity"/>
</dbReference>
<dbReference type="MIM" id="601685">
    <property type="type" value="gene"/>
</dbReference>
<dbReference type="neXtProt" id="NX_Q15349"/>
<dbReference type="OpenTargets" id="ENSG00000071242"/>
<dbReference type="PharmGKB" id="PA34846"/>
<dbReference type="VEuPathDB" id="HostDB:ENSG00000071242"/>
<dbReference type="eggNOG" id="KOG0603">
    <property type="taxonomic scope" value="Eukaryota"/>
</dbReference>
<dbReference type="GeneTree" id="ENSGT00940000159956"/>
<dbReference type="InParanoid" id="Q15349"/>
<dbReference type="OMA" id="GAMKATY"/>
<dbReference type="OrthoDB" id="63267at2759"/>
<dbReference type="PAN-GO" id="Q15349">
    <property type="GO annotations" value="4 GO annotations based on evolutionary models"/>
</dbReference>
<dbReference type="PhylomeDB" id="Q15349"/>
<dbReference type="TreeFam" id="TF313438"/>
<dbReference type="BRENDA" id="2.7.11.1">
    <property type="organism ID" value="2681"/>
</dbReference>
<dbReference type="PathwayCommons" id="Q15349"/>
<dbReference type="Reactome" id="R-HSA-198753">
    <property type="pathway name" value="ERK/MAPK targets"/>
</dbReference>
<dbReference type="Reactome" id="R-HSA-199920">
    <property type="pathway name" value="CREB phosphorylation"/>
</dbReference>
<dbReference type="Reactome" id="R-HSA-2559582">
    <property type="pathway name" value="Senescence-Associated Secretory Phenotype (SASP)"/>
</dbReference>
<dbReference type="Reactome" id="R-HSA-437239">
    <property type="pathway name" value="Recycling pathway of L1"/>
</dbReference>
<dbReference type="Reactome" id="R-HSA-442742">
    <property type="pathway name" value="CREB1 phosphorylation through NMDA receptor-mediated activation of RAS signaling"/>
</dbReference>
<dbReference type="Reactome" id="R-HSA-444257">
    <property type="pathway name" value="RSK activation"/>
</dbReference>
<dbReference type="Reactome" id="R-HSA-881907">
    <property type="pathway name" value="Gastrin-CREB signalling pathway via PKC and MAPK"/>
</dbReference>
<dbReference type="SignaLink" id="Q15349"/>
<dbReference type="SIGNOR" id="Q15349"/>
<dbReference type="BioGRID-ORCS" id="6196">
    <property type="hits" value="19 hits in 1179 CRISPR screens"/>
</dbReference>
<dbReference type="ChiTaRS" id="RPS6KA2">
    <property type="organism name" value="human"/>
</dbReference>
<dbReference type="GeneWiki" id="RPS6KA2"/>
<dbReference type="GenomeRNAi" id="6196"/>
<dbReference type="Pharos" id="Q15349">
    <property type="development level" value="Tchem"/>
</dbReference>
<dbReference type="PRO" id="PR:Q15349"/>
<dbReference type="Proteomes" id="UP000005640">
    <property type="component" value="Chromosome 6"/>
</dbReference>
<dbReference type="RNAct" id="Q15349">
    <property type="molecule type" value="protein"/>
</dbReference>
<dbReference type="Bgee" id="ENSG00000071242">
    <property type="expression patterns" value="Expressed in inferior olivary complex and 215 other cell types or tissues"/>
</dbReference>
<dbReference type="ExpressionAtlas" id="Q15349">
    <property type="expression patterns" value="baseline and differential"/>
</dbReference>
<dbReference type="GO" id="GO:0005737">
    <property type="term" value="C:cytoplasm"/>
    <property type="evidence" value="ECO:0000314"/>
    <property type="project" value="UniProtKB"/>
</dbReference>
<dbReference type="GO" id="GO:0005829">
    <property type="term" value="C:cytosol"/>
    <property type="evidence" value="ECO:0000304"/>
    <property type="project" value="Reactome"/>
</dbReference>
<dbReference type="GO" id="GO:0072687">
    <property type="term" value="C:meiotic spindle"/>
    <property type="evidence" value="ECO:0007669"/>
    <property type="project" value="Ensembl"/>
</dbReference>
<dbReference type="GO" id="GO:0005654">
    <property type="term" value="C:nucleoplasm"/>
    <property type="evidence" value="ECO:0000314"/>
    <property type="project" value="HPA"/>
</dbReference>
<dbReference type="GO" id="GO:0005634">
    <property type="term" value="C:nucleus"/>
    <property type="evidence" value="ECO:0000314"/>
    <property type="project" value="UniProtKB"/>
</dbReference>
<dbReference type="GO" id="GO:0045202">
    <property type="term" value="C:synapse"/>
    <property type="evidence" value="ECO:0007669"/>
    <property type="project" value="GOC"/>
</dbReference>
<dbReference type="GO" id="GO:0005524">
    <property type="term" value="F:ATP binding"/>
    <property type="evidence" value="ECO:0007669"/>
    <property type="project" value="UniProtKB-KW"/>
</dbReference>
<dbReference type="GO" id="GO:0000287">
    <property type="term" value="F:magnesium ion binding"/>
    <property type="evidence" value="ECO:0007669"/>
    <property type="project" value="InterPro"/>
</dbReference>
<dbReference type="GO" id="GO:0106310">
    <property type="term" value="F:protein serine kinase activity"/>
    <property type="evidence" value="ECO:0007669"/>
    <property type="project" value="RHEA"/>
</dbReference>
<dbReference type="GO" id="GO:0004674">
    <property type="term" value="F:protein serine/threonine kinase activity"/>
    <property type="evidence" value="ECO:0000304"/>
    <property type="project" value="Reactome"/>
</dbReference>
<dbReference type="GO" id="GO:0004712">
    <property type="term" value="F:protein serine/threonine/tyrosine kinase activity"/>
    <property type="evidence" value="ECO:0000314"/>
    <property type="project" value="MGI"/>
</dbReference>
<dbReference type="GO" id="GO:0004711">
    <property type="term" value="F:ribosomal protein S6 kinase activity"/>
    <property type="evidence" value="ECO:0000318"/>
    <property type="project" value="GO_Central"/>
</dbReference>
<dbReference type="GO" id="GO:0002035">
    <property type="term" value="P:brain renin-angiotensin system"/>
    <property type="evidence" value="ECO:0007669"/>
    <property type="project" value="Ensembl"/>
</dbReference>
<dbReference type="GO" id="GO:0010659">
    <property type="term" value="P:cardiac muscle cell apoptotic process"/>
    <property type="evidence" value="ECO:0007669"/>
    <property type="project" value="Ensembl"/>
</dbReference>
<dbReference type="GO" id="GO:0071322">
    <property type="term" value="P:cellular response to carbohydrate stimulus"/>
    <property type="evidence" value="ECO:0007669"/>
    <property type="project" value="Ensembl"/>
</dbReference>
<dbReference type="GO" id="GO:0007268">
    <property type="term" value="P:chemical synaptic transmission"/>
    <property type="evidence" value="ECO:0000304"/>
    <property type="project" value="Reactome"/>
</dbReference>
<dbReference type="GO" id="GO:0060047">
    <property type="term" value="P:heart contraction"/>
    <property type="evidence" value="ECO:0007669"/>
    <property type="project" value="Ensembl"/>
</dbReference>
<dbReference type="GO" id="GO:0007507">
    <property type="term" value="P:heart development"/>
    <property type="evidence" value="ECO:0007669"/>
    <property type="project" value="Ensembl"/>
</dbReference>
<dbReference type="GO" id="GO:0035556">
    <property type="term" value="P:intracellular signal transduction"/>
    <property type="evidence" value="ECO:0000304"/>
    <property type="project" value="ProtInc"/>
</dbReference>
<dbReference type="GO" id="GO:0045786">
    <property type="term" value="P:negative regulation of cell cycle"/>
    <property type="evidence" value="ECO:0000314"/>
    <property type="project" value="UniProtKB"/>
</dbReference>
<dbReference type="GO" id="GO:0008285">
    <property type="term" value="P:negative regulation of cell population proliferation"/>
    <property type="evidence" value="ECO:0000314"/>
    <property type="project" value="UniProtKB"/>
</dbReference>
<dbReference type="GO" id="GO:0045835">
    <property type="term" value="P:negative regulation of meiotic nuclear division"/>
    <property type="evidence" value="ECO:0007669"/>
    <property type="project" value="Ensembl"/>
</dbReference>
<dbReference type="GO" id="GO:0001556">
    <property type="term" value="P:oocyte maturation"/>
    <property type="evidence" value="ECO:0007669"/>
    <property type="project" value="Ensembl"/>
</dbReference>
<dbReference type="GO" id="GO:0043065">
    <property type="term" value="P:positive regulation of apoptotic process"/>
    <property type="evidence" value="ECO:0000314"/>
    <property type="project" value="UniProtKB"/>
</dbReference>
<dbReference type="GO" id="GO:0010628">
    <property type="term" value="P:positive regulation of gene expression"/>
    <property type="evidence" value="ECO:0007669"/>
    <property type="project" value="Ensembl"/>
</dbReference>
<dbReference type="GO" id="GO:0070613">
    <property type="term" value="P:regulation of protein processing"/>
    <property type="evidence" value="ECO:0007669"/>
    <property type="project" value="Ensembl"/>
</dbReference>
<dbReference type="GO" id="GO:0007165">
    <property type="term" value="P:signal transduction"/>
    <property type="evidence" value="ECO:0000303"/>
    <property type="project" value="ProtInc"/>
</dbReference>
<dbReference type="GO" id="GO:0038202">
    <property type="term" value="P:TORC1 signaling"/>
    <property type="evidence" value="ECO:0000318"/>
    <property type="project" value="GO_Central"/>
</dbReference>
<dbReference type="CDD" id="cd14178">
    <property type="entry name" value="STKc_RSK3_C"/>
    <property type="match status" value="1"/>
</dbReference>
<dbReference type="CDD" id="cd05582">
    <property type="entry name" value="STKc_RSK_N"/>
    <property type="match status" value="1"/>
</dbReference>
<dbReference type="FunFam" id="1.10.510.10:FF:000010">
    <property type="entry name" value="Ribosomal protein S6 kinase"/>
    <property type="match status" value="1"/>
</dbReference>
<dbReference type="FunFam" id="1.10.510.10:FF:000041">
    <property type="entry name" value="Ribosomal protein S6 kinase"/>
    <property type="match status" value="1"/>
</dbReference>
<dbReference type="FunFam" id="3.30.200.20:FF:000013">
    <property type="entry name" value="Ribosomal protein S6 kinase"/>
    <property type="match status" value="1"/>
</dbReference>
<dbReference type="FunFam" id="3.30.200.20:FF:000121">
    <property type="entry name" value="Ribosomal protein S6 kinase"/>
    <property type="match status" value="1"/>
</dbReference>
<dbReference type="Gene3D" id="3.30.200.20">
    <property type="entry name" value="Phosphorylase Kinase, domain 1"/>
    <property type="match status" value="2"/>
</dbReference>
<dbReference type="Gene3D" id="1.10.510.10">
    <property type="entry name" value="Transferase(Phosphotransferase) domain 1"/>
    <property type="match status" value="2"/>
</dbReference>
<dbReference type="InterPro" id="IPR000961">
    <property type="entry name" value="AGC-kinase_C"/>
</dbReference>
<dbReference type="InterPro" id="IPR011009">
    <property type="entry name" value="Kinase-like_dom_sf"/>
</dbReference>
<dbReference type="InterPro" id="IPR017892">
    <property type="entry name" value="Pkinase_C"/>
</dbReference>
<dbReference type="InterPro" id="IPR000719">
    <property type="entry name" value="Prot_kinase_dom"/>
</dbReference>
<dbReference type="InterPro" id="IPR017441">
    <property type="entry name" value="Protein_kinase_ATP_BS"/>
</dbReference>
<dbReference type="InterPro" id="IPR016239">
    <property type="entry name" value="Ribosomal_S6_kinase_II"/>
</dbReference>
<dbReference type="InterPro" id="IPR042766">
    <property type="entry name" value="RSK3_STKc"/>
</dbReference>
<dbReference type="InterPro" id="IPR041906">
    <property type="entry name" value="RSK_N"/>
</dbReference>
<dbReference type="InterPro" id="IPR008271">
    <property type="entry name" value="Ser/Thr_kinase_AS"/>
</dbReference>
<dbReference type="PANTHER" id="PTHR24351">
    <property type="entry name" value="RIBOSOMAL PROTEIN S6 KINASE"/>
    <property type="match status" value="1"/>
</dbReference>
<dbReference type="Pfam" id="PF00069">
    <property type="entry name" value="Pkinase"/>
    <property type="match status" value="2"/>
</dbReference>
<dbReference type="Pfam" id="PF00433">
    <property type="entry name" value="Pkinase_C"/>
    <property type="match status" value="1"/>
</dbReference>
<dbReference type="PIRSF" id="PIRSF000606">
    <property type="entry name" value="Ribsml_S6_kin_2"/>
    <property type="match status" value="1"/>
</dbReference>
<dbReference type="SMART" id="SM00133">
    <property type="entry name" value="S_TK_X"/>
    <property type="match status" value="1"/>
</dbReference>
<dbReference type="SMART" id="SM00220">
    <property type="entry name" value="S_TKc"/>
    <property type="match status" value="2"/>
</dbReference>
<dbReference type="SUPFAM" id="SSF56112">
    <property type="entry name" value="Protein kinase-like (PK-like)"/>
    <property type="match status" value="2"/>
</dbReference>
<dbReference type="PROSITE" id="PS51285">
    <property type="entry name" value="AGC_KINASE_CTER"/>
    <property type="match status" value="1"/>
</dbReference>
<dbReference type="PROSITE" id="PS00107">
    <property type="entry name" value="PROTEIN_KINASE_ATP"/>
    <property type="match status" value="2"/>
</dbReference>
<dbReference type="PROSITE" id="PS50011">
    <property type="entry name" value="PROTEIN_KINASE_DOM"/>
    <property type="match status" value="2"/>
</dbReference>
<dbReference type="PROSITE" id="PS00108">
    <property type="entry name" value="PROTEIN_KINASE_ST"/>
    <property type="match status" value="2"/>
</dbReference>
<proteinExistence type="evidence at protein level"/>
<reference key="1">
    <citation type="journal article" date="1995" name="Mol. Cell. Biol.">
        <title>RSK3 encodes a novel pp90rsk isoform with a unique N-terminal sequence: growth factor-stimulated kinase function and nuclear translocation.</title>
        <authorList>
            <person name="Zhao Y."/>
            <person name="Bjoerbaek C."/>
            <person name="Weremowicz S."/>
            <person name="Morton C.C."/>
            <person name="Moller D.E."/>
        </authorList>
    </citation>
    <scope>NUCLEOTIDE SEQUENCE [MRNA] (ISOFORM 1)</scope>
    <scope>FUNCTION</scope>
    <scope>TISSUE SPECIFICITY</scope>
    <scope>SUBCELLULAR LOCATION</scope>
</reference>
<reference key="2">
    <citation type="submission" date="2005-03" db="EMBL/GenBank/DDBJ databases">
        <authorList>
            <person name="Totoki Y."/>
            <person name="Toyoda A."/>
            <person name="Takeda T."/>
            <person name="Sakaki Y."/>
            <person name="Tanaka A."/>
            <person name="Yokoyama S."/>
            <person name="Ohara O."/>
            <person name="Nagase T."/>
            <person name="Kikuno R.F."/>
        </authorList>
    </citation>
    <scope>NUCLEOTIDE SEQUENCE [LARGE SCALE MRNA] (ISOFORM 2)</scope>
    <source>
        <tissue>Brain</tissue>
    </source>
</reference>
<reference key="3">
    <citation type="journal article" date="2004" name="Nat. Genet.">
        <title>Complete sequencing and characterization of 21,243 full-length human cDNAs.</title>
        <authorList>
            <person name="Ota T."/>
            <person name="Suzuki Y."/>
            <person name="Nishikawa T."/>
            <person name="Otsuki T."/>
            <person name="Sugiyama T."/>
            <person name="Irie R."/>
            <person name="Wakamatsu A."/>
            <person name="Hayashi K."/>
            <person name="Sato H."/>
            <person name="Nagai K."/>
            <person name="Kimura K."/>
            <person name="Makita H."/>
            <person name="Sekine M."/>
            <person name="Obayashi M."/>
            <person name="Nishi T."/>
            <person name="Shibahara T."/>
            <person name="Tanaka T."/>
            <person name="Ishii S."/>
            <person name="Yamamoto J."/>
            <person name="Saito K."/>
            <person name="Kawai Y."/>
            <person name="Isono Y."/>
            <person name="Nakamura Y."/>
            <person name="Nagahari K."/>
            <person name="Murakami K."/>
            <person name="Yasuda T."/>
            <person name="Iwayanagi T."/>
            <person name="Wagatsuma M."/>
            <person name="Shiratori A."/>
            <person name="Sudo H."/>
            <person name="Hosoiri T."/>
            <person name="Kaku Y."/>
            <person name="Kodaira H."/>
            <person name="Kondo H."/>
            <person name="Sugawara M."/>
            <person name="Takahashi M."/>
            <person name="Kanda K."/>
            <person name="Yokoi T."/>
            <person name="Furuya T."/>
            <person name="Kikkawa E."/>
            <person name="Omura Y."/>
            <person name="Abe K."/>
            <person name="Kamihara K."/>
            <person name="Katsuta N."/>
            <person name="Sato K."/>
            <person name="Tanikawa M."/>
            <person name="Yamazaki M."/>
            <person name="Ninomiya K."/>
            <person name="Ishibashi T."/>
            <person name="Yamashita H."/>
            <person name="Murakawa K."/>
            <person name="Fujimori K."/>
            <person name="Tanai H."/>
            <person name="Kimata M."/>
            <person name="Watanabe M."/>
            <person name="Hiraoka S."/>
            <person name="Chiba Y."/>
            <person name="Ishida S."/>
            <person name="Ono Y."/>
            <person name="Takiguchi S."/>
            <person name="Watanabe S."/>
            <person name="Yosida M."/>
            <person name="Hotuta T."/>
            <person name="Kusano J."/>
            <person name="Kanehori K."/>
            <person name="Takahashi-Fujii A."/>
            <person name="Hara H."/>
            <person name="Tanase T.-O."/>
            <person name="Nomura Y."/>
            <person name="Togiya S."/>
            <person name="Komai F."/>
            <person name="Hara R."/>
            <person name="Takeuchi K."/>
            <person name="Arita M."/>
            <person name="Imose N."/>
            <person name="Musashino K."/>
            <person name="Yuuki H."/>
            <person name="Oshima A."/>
            <person name="Sasaki N."/>
            <person name="Aotsuka S."/>
            <person name="Yoshikawa Y."/>
            <person name="Matsunawa H."/>
            <person name="Ichihara T."/>
            <person name="Shiohata N."/>
            <person name="Sano S."/>
            <person name="Moriya S."/>
            <person name="Momiyama H."/>
            <person name="Satoh N."/>
            <person name="Takami S."/>
            <person name="Terashima Y."/>
            <person name="Suzuki O."/>
            <person name="Nakagawa S."/>
            <person name="Senoh A."/>
            <person name="Mizoguchi H."/>
            <person name="Goto Y."/>
            <person name="Shimizu F."/>
            <person name="Wakebe H."/>
            <person name="Hishigaki H."/>
            <person name="Watanabe T."/>
            <person name="Sugiyama A."/>
            <person name="Takemoto M."/>
            <person name="Kawakami B."/>
            <person name="Yamazaki M."/>
            <person name="Watanabe K."/>
            <person name="Kumagai A."/>
            <person name="Itakura S."/>
            <person name="Fukuzumi Y."/>
            <person name="Fujimori Y."/>
            <person name="Komiyama M."/>
            <person name="Tashiro H."/>
            <person name="Tanigami A."/>
            <person name="Fujiwara T."/>
            <person name="Ono T."/>
            <person name="Yamada K."/>
            <person name="Fujii Y."/>
            <person name="Ozaki K."/>
            <person name="Hirao M."/>
            <person name="Ohmori Y."/>
            <person name="Kawabata A."/>
            <person name="Hikiji T."/>
            <person name="Kobatake N."/>
            <person name="Inagaki H."/>
            <person name="Ikema Y."/>
            <person name="Okamoto S."/>
            <person name="Okitani R."/>
            <person name="Kawakami T."/>
            <person name="Noguchi S."/>
            <person name="Itoh T."/>
            <person name="Shigeta K."/>
            <person name="Senba T."/>
            <person name="Matsumura K."/>
            <person name="Nakajima Y."/>
            <person name="Mizuno T."/>
            <person name="Morinaga M."/>
            <person name="Sasaki M."/>
            <person name="Togashi T."/>
            <person name="Oyama M."/>
            <person name="Hata H."/>
            <person name="Watanabe M."/>
            <person name="Komatsu T."/>
            <person name="Mizushima-Sugano J."/>
            <person name="Satoh T."/>
            <person name="Shirai Y."/>
            <person name="Takahashi Y."/>
            <person name="Nakagawa K."/>
            <person name="Okumura K."/>
            <person name="Nagase T."/>
            <person name="Nomura N."/>
            <person name="Kikuchi H."/>
            <person name="Masuho Y."/>
            <person name="Yamashita R."/>
            <person name="Nakai K."/>
            <person name="Yada T."/>
            <person name="Nakamura Y."/>
            <person name="Ohara O."/>
            <person name="Isogai T."/>
            <person name="Sugano S."/>
        </authorList>
    </citation>
    <scope>NUCLEOTIDE SEQUENCE [LARGE SCALE MRNA] (ISOFORM 3)</scope>
    <source>
        <tissue>Brain</tissue>
    </source>
</reference>
<reference key="4">
    <citation type="journal article" date="2003" name="Nature">
        <title>The DNA sequence and analysis of human chromosome 6.</title>
        <authorList>
            <person name="Mungall A.J."/>
            <person name="Palmer S.A."/>
            <person name="Sims S.K."/>
            <person name="Edwards C.A."/>
            <person name="Ashurst J.L."/>
            <person name="Wilming L."/>
            <person name="Jones M.C."/>
            <person name="Horton R."/>
            <person name="Hunt S.E."/>
            <person name="Scott C.E."/>
            <person name="Gilbert J.G.R."/>
            <person name="Clamp M.E."/>
            <person name="Bethel G."/>
            <person name="Milne S."/>
            <person name="Ainscough R."/>
            <person name="Almeida J.P."/>
            <person name="Ambrose K.D."/>
            <person name="Andrews T.D."/>
            <person name="Ashwell R.I.S."/>
            <person name="Babbage A.K."/>
            <person name="Bagguley C.L."/>
            <person name="Bailey J."/>
            <person name="Banerjee R."/>
            <person name="Barker D.J."/>
            <person name="Barlow K.F."/>
            <person name="Bates K."/>
            <person name="Beare D.M."/>
            <person name="Beasley H."/>
            <person name="Beasley O."/>
            <person name="Bird C.P."/>
            <person name="Blakey S.E."/>
            <person name="Bray-Allen S."/>
            <person name="Brook J."/>
            <person name="Brown A.J."/>
            <person name="Brown J.Y."/>
            <person name="Burford D.C."/>
            <person name="Burrill W."/>
            <person name="Burton J."/>
            <person name="Carder C."/>
            <person name="Carter N.P."/>
            <person name="Chapman J.C."/>
            <person name="Clark S.Y."/>
            <person name="Clark G."/>
            <person name="Clee C.M."/>
            <person name="Clegg S."/>
            <person name="Cobley V."/>
            <person name="Collier R.E."/>
            <person name="Collins J.E."/>
            <person name="Colman L.K."/>
            <person name="Corby N.R."/>
            <person name="Coville G.J."/>
            <person name="Culley K.M."/>
            <person name="Dhami P."/>
            <person name="Davies J."/>
            <person name="Dunn M."/>
            <person name="Earthrowl M.E."/>
            <person name="Ellington A.E."/>
            <person name="Evans K.A."/>
            <person name="Faulkner L."/>
            <person name="Francis M.D."/>
            <person name="Frankish A."/>
            <person name="Frankland J."/>
            <person name="French L."/>
            <person name="Garner P."/>
            <person name="Garnett J."/>
            <person name="Ghori M.J."/>
            <person name="Gilby L.M."/>
            <person name="Gillson C.J."/>
            <person name="Glithero R.J."/>
            <person name="Grafham D.V."/>
            <person name="Grant M."/>
            <person name="Gribble S."/>
            <person name="Griffiths C."/>
            <person name="Griffiths M.N.D."/>
            <person name="Hall R."/>
            <person name="Halls K.S."/>
            <person name="Hammond S."/>
            <person name="Harley J.L."/>
            <person name="Hart E.A."/>
            <person name="Heath P.D."/>
            <person name="Heathcott R."/>
            <person name="Holmes S.J."/>
            <person name="Howden P.J."/>
            <person name="Howe K.L."/>
            <person name="Howell G.R."/>
            <person name="Huckle E."/>
            <person name="Humphray S.J."/>
            <person name="Humphries M.D."/>
            <person name="Hunt A.R."/>
            <person name="Johnson C.M."/>
            <person name="Joy A.A."/>
            <person name="Kay M."/>
            <person name="Keenan S.J."/>
            <person name="Kimberley A.M."/>
            <person name="King A."/>
            <person name="Laird G.K."/>
            <person name="Langford C."/>
            <person name="Lawlor S."/>
            <person name="Leongamornlert D.A."/>
            <person name="Leversha M."/>
            <person name="Lloyd C.R."/>
            <person name="Lloyd D.M."/>
            <person name="Loveland J.E."/>
            <person name="Lovell J."/>
            <person name="Martin S."/>
            <person name="Mashreghi-Mohammadi M."/>
            <person name="Maslen G.L."/>
            <person name="Matthews L."/>
            <person name="McCann O.T."/>
            <person name="McLaren S.J."/>
            <person name="McLay K."/>
            <person name="McMurray A."/>
            <person name="Moore M.J.F."/>
            <person name="Mullikin J.C."/>
            <person name="Niblett D."/>
            <person name="Nickerson T."/>
            <person name="Novik K.L."/>
            <person name="Oliver K."/>
            <person name="Overton-Larty E.K."/>
            <person name="Parker A."/>
            <person name="Patel R."/>
            <person name="Pearce A.V."/>
            <person name="Peck A.I."/>
            <person name="Phillimore B.J.C.T."/>
            <person name="Phillips S."/>
            <person name="Plumb R.W."/>
            <person name="Porter K.M."/>
            <person name="Ramsey Y."/>
            <person name="Ranby S.A."/>
            <person name="Rice C.M."/>
            <person name="Ross M.T."/>
            <person name="Searle S.M."/>
            <person name="Sehra H.K."/>
            <person name="Sheridan E."/>
            <person name="Skuce C.D."/>
            <person name="Smith S."/>
            <person name="Smith M."/>
            <person name="Spraggon L."/>
            <person name="Squares S.L."/>
            <person name="Steward C.A."/>
            <person name="Sycamore N."/>
            <person name="Tamlyn-Hall G."/>
            <person name="Tester J."/>
            <person name="Theaker A.J."/>
            <person name="Thomas D.W."/>
            <person name="Thorpe A."/>
            <person name="Tracey A."/>
            <person name="Tromans A."/>
            <person name="Tubby B."/>
            <person name="Wall M."/>
            <person name="Wallis J.M."/>
            <person name="West A.P."/>
            <person name="White S.S."/>
            <person name="Whitehead S.L."/>
            <person name="Whittaker H."/>
            <person name="Wild A."/>
            <person name="Willey D.J."/>
            <person name="Wilmer T.E."/>
            <person name="Wood J.M."/>
            <person name="Wray P.W."/>
            <person name="Wyatt J.C."/>
            <person name="Young L."/>
            <person name="Younger R.M."/>
            <person name="Bentley D.R."/>
            <person name="Coulson A."/>
            <person name="Durbin R.M."/>
            <person name="Hubbard T."/>
            <person name="Sulston J.E."/>
            <person name="Dunham I."/>
            <person name="Rogers J."/>
            <person name="Beck S."/>
        </authorList>
    </citation>
    <scope>NUCLEOTIDE SEQUENCE [LARGE SCALE GENOMIC DNA]</scope>
</reference>
<reference key="5">
    <citation type="journal article" date="2004" name="Genome Res.">
        <title>The status, quality, and expansion of the NIH full-length cDNA project: the Mammalian Gene Collection (MGC).</title>
        <authorList>
            <consortium name="The MGC Project Team"/>
        </authorList>
    </citation>
    <scope>NUCLEOTIDE SEQUENCE [LARGE SCALE MRNA] (ISOFORM 1)</scope>
    <source>
        <tissue>Muscle</tissue>
    </source>
</reference>
<reference key="6">
    <citation type="journal article" date="1994" name="Am. J. Physiol.">
        <title>Human rsk isoforms: cloning and characterization of tissue-specific expression.</title>
        <authorList>
            <person name="Moller D.E."/>
            <person name="Xia C.-H."/>
            <person name="Tang W."/>
            <person name="Zhu A.X."/>
            <person name="Jakubowski M."/>
        </authorList>
    </citation>
    <scope>NUCLEOTIDE SEQUENCE [MRNA] OF 1-540 (ISOFORM 1)</scope>
</reference>
<reference key="7">
    <citation type="journal article" date="1999" name="J. Biol. Chem.">
        <title>90-kDa ribosomal S6 kinase is phosphorylated and activated by 3-phosphoinositide-dependent protein kinase-1.</title>
        <authorList>
            <person name="Jensen C.J."/>
            <person name="Buch M.-B."/>
            <person name="Krag T.O."/>
            <person name="Hemmings B.A."/>
            <person name="Gammeltoft S."/>
            <person name="Froedin M."/>
        </authorList>
    </citation>
    <scope>ACTIVITY REGULATION</scope>
    <scope>PHOSPHORYLATION AT SER-218</scope>
</reference>
<reference key="8">
    <citation type="journal article" date="2007" name="Oncogene">
        <title>RPS6KA2, a putative tumour suppressor gene at 6q27 in sporadic epithelial ovarian cancer.</title>
        <authorList>
            <person name="Bignone P.A."/>
            <person name="Lee K.Y."/>
            <person name="Liu Y."/>
            <person name="Emilion G."/>
            <person name="Finch J."/>
            <person name="Soosay A.E."/>
            <person name="Charnock F.M."/>
            <person name="Beck S."/>
            <person name="Dunham I."/>
            <person name="Mungall A.J."/>
            <person name="Ganesan T.S."/>
        </authorList>
    </citation>
    <scope>FUNCTION IN TUMORIGENESIS</scope>
    <scope>TISSUE SPECIFICITY</scope>
</reference>
<reference key="9">
    <citation type="journal article" date="2008" name="Mol. Cell">
        <title>Kinase-selective enrichment enables quantitative phosphoproteomics of the kinome across the cell cycle.</title>
        <authorList>
            <person name="Daub H."/>
            <person name="Olsen J.V."/>
            <person name="Bairlein M."/>
            <person name="Gnad F."/>
            <person name="Oppermann F.S."/>
            <person name="Korner R."/>
            <person name="Greff Z."/>
            <person name="Keri G."/>
            <person name="Stemmann O."/>
            <person name="Mann M."/>
        </authorList>
    </citation>
    <scope>IDENTIFICATION BY MASS SPECTROMETRY [LARGE SCALE ANALYSIS]</scope>
    <source>
        <tissue>Cervix carcinoma</tissue>
    </source>
</reference>
<reference key="10">
    <citation type="journal article" date="2008" name="Nat. Rev. Mol. Cell Biol.">
        <title>The RSK family of kinases: emerging roles in cellular signalling.</title>
        <authorList>
            <person name="Anjum R."/>
            <person name="Blenis J."/>
        </authorList>
    </citation>
    <scope>REVIEW ON FUNCTION</scope>
</reference>
<reference key="11">
    <citation type="journal article" date="2009" name="Mol. Cell. Proteomics">
        <title>Large-scale proteomics analysis of the human kinome.</title>
        <authorList>
            <person name="Oppermann F.S."/>
            <person name="Gnad F."/>
            <person name="Olsen J.V."/>
            <person name="Hornberger R."/>
            <person name="Greff Z."/>
            <person name="Keri G."/>
            <person name="Mann M."/>
            <person name="Daub H."/>
        </authorList>
    </citation>
    <scope>PHOSPHORYLATION [LARGE SCALE ANALYSIS] AT SER-377</scope>
    <scope>IDENTIFICATION BY MASS SPECTROMETRY [LARGE SCALE ANALYSIS]</scope>
</reference>
<reference key="12">
    <citation type="journal article" date="2007" name="Nature">
        <title>Patterns of somatic mutation in human cancer genomes.</title>
        <authorList>
            <person name="Greenman C."/>
            <person name="Stephens P."/>
            <person name="Smith R."/>
            <person name="Dalgliesh G.L."/>
            <person name="Hunter C."/>
            <person name="Bignell G."/>
            <person name="Davies H."/>
            <person name="Teague J."/>
            <person name="Butler A."/>
            <person name="Stevens C."/>
            <person name="Edkins S."/>
            <person name="O'Meara S."/>
            <person name="Vastrik I."/>
            <person name="Schmidt E.E."/>
            <person name="Avis T."/>
            <person name="Barthorpe S."/>
            <person name="Bhamra G."/>
            <person name="Buck G."/>
            <person name="Choudhury B."/>
            <person name="Clements J."/>
            <person name="Cole J."/>
            <person name="Dicks E."/>
            <person name="Forbes S."/>
            <person name="Gray K."/>
            <person name="Halliday K."/>
            <person name="Harrison R."/>
            <person name="Hills K."/>
            <person name="Hinton J."/>
            <person name="Jenkinson A."/>
            <person name="Jones D."/>
            <person name="Menzies A."/>
            <person name="Mironenko T."/>
            <person name="Perry J."/>
            <person name="Raine K."/>
            <person name="Richardson D."/>
            <person name="Shepherd R."/>
            <person name="Small A."/>
            <person name="Tofts C."/>
            <person name="Varian J."/>
            <person name="Webb T."/>
            <person name="West S."/>
            <person name="Widaa S."/>
            <person name="Yates A."/>
            <person name="Cahill D.P."/>
            <person name="Louis D.N."/>
            <person name="Goldstraw P."/>
            <person name="Nicholson A.G."/>
            <person name="Brasseur F."/>
            <person name="Looijenga L."/>
            <person name="Weber B.L."/>
            <person name="Chiew Y.-E."/>
            <person name="DeFazio A."/>
            <person name="Greaves M.F."/>
            <person name="Green A.R."/>
            <person name="Campbell P."/>
            <person name="Birney E."/>
            <person name="Easton D.F."/>
            <person name="Chenevix-Trench G."/>
            <person name="Tan M.-H."/>
            <person name="Khoo S.K."/>
            <person name="Teh B.T."/>
            <person name="Yuen S.T."/>
            <person name="Leung S.Y."/>
            <person name="Wooster R."/>
            <person name="Futreal P.A."/>
            <person name="Stratton M.R."/>
        </authorList>
    </citation>
    <scope>VARIANTS [LARGE SCALE ANALYSIS] LYS-311 AND GLN-732</scope>
</reference>